<feature type="peptide" id="PRO_0000420749" description="Myosuppressin" evidence="3">
    <location>
        <begin position="1"/>
        <end position="10"/>
    </location>
</feature>
<feature type="modified residue" description="Pyrrolidone carboxylic acid" evidence="3">
    <location>
        <position position="1"/>
    </location>
</feature>
<feature type="modified residue" description="Phenylalanine amide" evidence="3">
    <location>
        <position position="10"/>
    </location>
</feature>
<name>NEMS_STRNA</name>
<organism>
    <name type="scientific">Striatophasma naukluftense</name>
    <name type="common">Gladiator</name>
    <name type="synonym">Heel-walker</name>
    <dbReference type="NCBI Taxonomy" id="1041429"/>
    <lineage>
        <taxon>Eukaryota</taxon>
        <taxon>Metazoa</taxon>
        <taxon>Ecdysozoa</taxon>
        <taxon>Arthropoda</taxon>
        <taxon>Hexapoda</taxon>
        <taxon>Insecta</taxon>
        <taxon>Pterygota</taxon>
        <taxon>Neoptera</taxon>
        <taxon>Polyneoptera</taxon>
        <taxon>Mantophasmatodea</taxon>
        <taxon>Austrophasmatidae</taxon>
        <taxon>Striatophasma</taxon>
    </lineage>
</organism>
<accession>B0M3C1</accession>
<sequence>QDVDHVFLRF</sequence>
<protein>
    <recommendedName>
        <fullName evidence="4">Myosuppressin</fullName>
        <shortName evidence="4">MS</shortName>
    </recommendedName>
</protein>
<comment type="function">
    <text evidence="1">Myoinhibiting neuropeptide.</text>
</comment>
<comment type="subcellular location">
    <subcellularLocation>
        <location evidence="6">Secreted</location>
    </subcellularLocation>
</comment>
<comment type="similarity">
    <text evidence="2">Belongs to the myosuppressin family.</text>
</comment>
<keyword id="KW-0027">Amidation</keyword>
<keyword id="KW-0903">Direct protein sequencing</keyword>
<keyword id="KW-0527">Neuropeptide</keyword>
<keyword id="KW-0873">Pyrrolidone carboxylic acid</keyword>
<keyword id="KW-0964">Secreted</keyword>
<dbReference type="GO" id="GO:0005576">
    <property type="term" value="C:extracellular region"/>
    <property type="evidence" value="ECO:0007669"/>
    <property type="project" value="UniProtKB-SubCell"/>
</dbReference>
<dbReference type="GO" id="GO:0007218">
    <property type="term" value="P:neuropeptide signaling pathway"/>
    <property type="evidence" value="ECO:0007669"/>
    <property type="project" value="UniProtKB-KW"/>
</dbReference>
<proteinExistence type="evidence at protein level"/>
<evidence type="ECO:0000250" key="1">
    <source>
        <dbReference type="UniProtKB" id="P61849"/>
    </source>
</evidence>
<evidence type="ECO:0000255" key="2"/>
<evidence type="ECO:0000269" key="3">
    <source>
    </source>
</evidence>
<evidence type="ECO:0000303" key="4">
    <source>
    </source>
</evidence>
<evidence type="ECO:0000305" key="5"/>
<evidence type="ECO:0000305" key="6">
    <source>
    </source>
</evidence>
<reference evidence="5" key="1">
    <citation type="journal article" date="2012" name="Syst. Biol.">
        <title>Peptidomics-based phylogeny and biogeography of Mantophasmatodea (Hexapoda).</title>
        <authorList>
            <person name="Predel R."/>
            <person name="Neupert S."/>
            <person name="Huetteroth W."/>
            <person name="Kahnt J."/>
            <person name="Waidelich D."/>
            <person name="Roth S."/>
        </authorList>
    </citation>
    <scope>PROTEIN SEQUENCE</scope>
    <scope>PYROGLUTAMATE FORMATION AT GLN-1</scope>
    <scope>AMIDATION AT PHE-10</scope>
    <source>
        <tissue evidence="3">Corpora cardiaca</tissue>
    </source>
</reference>